<gene>
    <name evidence="1" type="primary">leuS</name>
    <name type="ordered locus">ECED1_0639</name>
</gene>
<comment type="catalytic activity">
    <reaction evidence="1">
        <text>tRNA(Leu) + L-leucine + ATP = L-leucyl-tRNA(Leu) + AMP + diphosphate</text>
        <dbReference type="Rhea" id="RHEA:11688"/>
        <dbReference type="Rhea" id="RHEA-COMP:9613"/>
        <dbReference type="Rhea" id="RHEA-COMP:9622"/>
        <dbReference type="ChEBI" id="CHEBI:30616"/>
        <dbReference type="ChEBI" id="CHEBI:33019"/>
        <dbReference type="ChEBI" id="CHEBI:57427"/>
        <dbReference type="ChEBI" id="CHEBI:78442"/>
        <dbReference type="ChEBI" id="CHEBI:78494"/>
        <dbReference type="ChEBI" id="CHEBI:456215"/>
        <dbReference type="EC" id="6.1.1.4"/>
    </reaction>
</comment>
<comment type="subcellular location">
    <subcellularLocation>
        <location evidence="1">Cytoplasm</location>
    </subcellularLocation>
</comment>
<comment type="similarity">
    <text evidence="1">Belongs to the class-I aminoacyl-tRNA synthetase family.</text>
</comment>
<dbReference type="EC" id="6.1.1.4" evidence="1"/>
<dbReference type="EMBL" id="CU928162">
    <property type="protein sequence ID" value="CAR06846.1"/>
    <property type="molecule type" value="Genomic_DNA"/>
</dbReference>
<dbReference type="RefSeq" id="WP_001157896.1">
    <property type="nucleotide sequence ID" value="NC_011745.1"/>
</dbReference>
<dbReference type="SMR" id="B7MRS9"/>
<dbReference type="KEGG" id="ecq:ECED1_0639"/>
<dbReference type="HOGENOM" id="CLU_004427_0_0_6"/>
<dbReference type="Proteomes" id="UP000000748">
    <property type="component" value="Chromosome"/>
</dbReference>
<dbReference type="GO" id="GO:0005829">
    <property type="term" value="C:cytosol"/>
    <property type="evidence" value="ECO:0007669"/>
    <property type="project" value="TreeGrafter"/>
</dbReference>
<dbReference type="GO" id="GO:0002161">
    <property type="term" value="F:aminoacyl-tRNA deacylase activity"/>
    <property type="evidence" value="ECO:0007669"/>
    <property type="project" value="InterPro"/>
</dbReference>
<dbReference type="GO" id="GO:0005524">
    <property type="term" value="F:ATP binding"/>
    <property type="evidence" value="ECO:0007669"/>
    <property type="project" value="UniProtKB-UniRule"/>
</dbReference>
<dbReference type="GO" id="GO:0004823">
    <property type="term" value="F:leucine-tRNA ligase activity"/>
    <property type="evidence" value="ECO:0007669"/>
    <property type="project" value="UniProtKB-UniRule"/>
</dbReference>
<dbReference type="GO" id="GO:0006429">
    <property type="term" value="P:leucyl-tRNA aminoacylation"/>
    <property type="evidence" value="ECO:0007669"/>
    <property type="project" value="UniProtKB-UniRule"/>
</dbReference>
<dbReference type="CDD" id="cd07958">
    <property type="entry name" value="Anticodon_Ia_Leu_BEm"/>
    <property type="match status" value="1"/>
</dbReference>
<dbReference type="CDD" id="cd00812">
    <property type="entry name" value="LeuRS_core"/>
    <property type="match status" value="1"/>
</dbReference>
<dbReference type="FunFam" id="1.10.730.10:FF:000002">
    <property type="entry name" value="Leucine--tRNA ligase"/>
    <property type="match status" value="2"/>
</dbReference>
<dbReference type="FunFam" id="2.20.28.290:FF:000001">
    <property type="entry name" value="Leucine--tRNA ligase"/>
    <property type="match status" value="1"/>
</dbReference>
<dbReference type="FunFam" id="3.10.20.590:FF:000001">
    <property type="entry name" value="Leucine--tRNA ligase"/>
    <property type="match status" value="1"/>
</dbReference>
<dbReference type="FunFam" id="3.40.50.620:FF:000003">
    <property type="entry name" value="Leucine--tRNA ligase"/>
    <property type="match status" value="1"/>
</dbReference>
<dbReference type="FunFam" id="3.40.50.620:FF:000124">
    <property type="entry name" value="Leucine--tRNA ligase"/>
    <property type="match status" value="1"/>
</dbReference>
<dbReference type="FunFam" id="3.90.740.10:FF:000012">
    <property type="entry name" value="Leucine--tRNA ligase"/>
    <property type="match status" value="1"/>
</dbReference>
<dbReference type="Gene3D" id="2.20.28.290">
    <property type="match status" value="1"/>
</dbReference>
<dbReference type="Gene3D" id="3.10.20.590">
    <property type="match status" value="1"/>
</dbReference>
<dbReference type="Gene3D" id="3.40.50.620">
    <property type="entry name" value="HUPs"/>
    <property type="match status" value="2"/>
</dbReference>
<dbReference type="Gene3D" id="1.10.730.10">
    <property type="entry name" value="Isoleucyl-tRNA Synthetase, Domain 1"/>
    <property type="match status" value="1"/>
</dbReference>
<dbReference type="HAMAP" id="MF_00049_B">
    <property type="entry name" value="Leu_tRNA_synth_B"/>
    <property type="match status" value="1"/>
</dbReference>
<dbReference type="InterPro" id="IPR001412">
    <property type="entry name" value="aa-tRNA-synth_I_CS"/>
</dbReference>
<dbReference type="InterPro" id="IPR002300">
    <property type="entry name" value="aa-tRNA-synth_Ia"/>
</dbReference>
<dbReference type="InterPro" id="IPR002302">
    <property type="entry name" value="Leu-tRNA-ligase"/>
</dbReference>
<dbReference type="InterPro" id="IPR025709">
    <property type="entry name" value="Leu_tRNA-synth_edit"/>
</dbReference>
<dbReference type="InterPro" id="IPR013155">
    <property type="entry name" value="M/V/L/I-tRNA-synth_anticd-bd"/>
</dbReference>
<dbReference type="InterPro" id="IPR015413">
    <property type="entry name" value="Methionyl/Leucyl_tRNA_Synth"/>
</dbReference>
<dbReference type="InterPro" id="IPR014729">
    <property type="entry name" value="Rossmann-like_a/b/a_fold"/>
</dbReference>
<dbReference type="InterPro" id="IPR009080">
    <property type="entry name" value="tRNAsynth_Ia_anticodon-bd"/>
</dbReference>
<dbReference type="InterPro" id="IPR009008">
    <property type="entry name" value="Val/Leu/Ile-tRNA-synth_edit"/>
</dbReference>
<dbReference type="NCBIfam" id="TIGR00396">
    <property type="entry name" value="leuS_bact"/>
    <property type="match status" value="1"/>
</dbReference>
<dbReference type="PANTHER" id="PTHR43740:SF2">
    <property type="entry name" value="LEUCINE--TRNA LIGASE, MITOCHONDRIAL"/>
    <property type="match status" value="1"/>
</dbReference>
<dbReference type="PANTHER" id="PTHR43740">
    <property type="entry name" value="LEUCYL-TRNA SYNTHETASE"/>
    <property type="match status" value="1"/>
</dbReference>
<dbReference type="Pfam" id="PF08264">
    <property type="entry name" value="Anticodon_1"/>
    <property type="match status" value="1"/>
</dbReference>
<dbReference type="Pfam" id="PF00133">
    <property type="entry name" value="tRNA-synt_1"/>
    <property type="match status" value="2"/>
</dbReference>
<dbReference type="Pfam" id="PF13603">
    <property type="entry name" value="tRNA-synt_1_2"/>
    <property type="match status" value="1"/>
</dbReference>
<dbReference type="Pfam" id="PF09334">
    <property type="entry name" value="tRNA-synt_1g"/>
    <property type="match status" value="1"/>
</dbReference>
<dbReference type="PRINTS" id="PR00985">
    <property type="entry name" value="TRNASYNTHLEU"/>
</dbReference>
<dbReference type="SUPFAM" id="SSF47323">
    <property type="entry name" value="Anticodon-binding domain of a subclass of class I aminoacyl-tRNA synthetases"/>
    <property type="match status" value="1"/>
</dbReference>
<dbReference type="SUPFAM" id="SSF52374">
    <property type="entry name" value="Nucleotidylyl transferase"/>
    <property type="match status" value="1"/>
</dbReference>
<dbReference type="SUPFAM" id="SSF50677">
    <property type="entry name" value="ValRS/IleRS/LeuRS editing domain"/>
    <property type="match status" value="1"/>
</dbReference>
<dbReference type="PROSITE" id="PS00178">
    <property type="entry name" value="AA_TRNA_LIGASE_I"/>
    <property type="match status" value="1"/>
</dbReference>
<sequence length="860" mass="97235">MQEQYRPEEIESKVQLHWDEKRTFEVTEDESKEKYYCLSMLPYPSGRLHMGHVRNYTIGDVIARYQRMLGKNVLQPIGWDAFGLPAEGAAVKNNTAPAPWTYDNIAYMKNQLKMLGFGYDWSRELATCTPEYYRWEQKFFTELYKKGLVYKKTSAVNWCPNDQTVLANEQVIDGCCWRCDTKVERKEIPQWFIKITAYADELLNDLDKLDHWPDTVKTMQRNWIGRSEGVEITFNVNDYDNTLTVYTTRPDTFMGCTYLAVAAGHPLAQKAAENNPELAAFIDECRNTKVAEAEMATMEKKGVDTGFKAVHPLTGEEIPVWAANFVLMEYGTGAVMAVPGHDQRDYEFASKYGLNIKPVILAADGSEPDLSQQALTEKGVLFNSGEFNGLDHEAAFNAIADKLTAMGVGERKVNYRLRDWGVSRQRYWGAPIPMVTLEDGTVMPTPDDQLPVILPEDVVMDGITSPIKADPEWAKTTVNGMPALRETDTFDTFMESSWYYARYTCPEYKEGMLDSKAANYWLPVDIYIGGIEHAIMHLLYFRFFHKLMRDAGMVNSDEPAKQLLCQGMVLADAFYYVGENGERNWVSPVDAIVERDEKGRIVKAKDAAGHELVYTGMSKMSKSKNNGIDPQVMVERYGADTVRLFMMFASPADMTLEWQESGVEGANRFLKRVWKLVYEHTAKGDVAALNVDALTEDQKALRRDVHKTIAKVTDDIGRRQTFNTAIAAIMELMNKLAKAPTDGEQDRALMQEALLAVVRMLNPFTPHICFTLWQELKGEGDIDNAPWPVADEKAMVEDSTLVVVQVNGKVRAKITVPVDATEEQVRERAGQEHLVAKYLDGVTVRKVIYVPGKLLNLVVG</sequence>
<keyword id="KW-0030">Aminoacyl-tRNA synthetase</keyword>
<keyword id="KW-0067">ATP-binding</keyword>
<keyword id="KW-0963">Cytoplasm</keyword>
<keyword id="KW-0436">Ligase</keyword>
<keyword id="KW-0547">Nucleotide-binding</keyword>
<keyword id="KW-0648">Protein biosynthesis</keyword>
<reference key="1">
    <citation type="journal article" date="2009" name="PLoS Genet.">
        <title>Organised genome dynamics in the Escherichia coli species results in highly diverse adaptive paths.</title>
        <authorList>
            <person name="Touchon M."/>
            <person name="Hoede C."/>
            <person name="Tenaillon O."/>
            <person name="Barbe V."/>
            <person name="Baeriswyl S."/>
            <person name="Bidet P."/>
            <person name="Bingen E."/>
            <person name="Bonacorsi S."/>
            <person name="Bouchier C."/>
            <person name="Bouvet O."/>
            <person name="Calteau A."/>
            <person name="Chiapello H."/>
            <person name="Clermont O."/>
            <person name="Cruveiller S."/>
            <person name="Danchin A."/>
            <person name="Diard M."/>
            <person name="Dossat C."/>
            <person name="Karoui M.E."/>
            <person name="Frapy E."/>
            <person name="Garry L."/>
            <person name="Ghigo J.M."/>
            <person name="Gilles A.M."/>
            <person name="Johnson J."/>
            <person name="Le Bouguenec C."/>
            <person name="Lescat M."/>
            <person name="Mangenot S."/>
            <person name="Martinez-Jehanne V."/>
            <person name="Matic I."/>
            <person name="Nassif X."/>
            <person name="Oztas S."/>
            <person name="Petit M.A."/>
            <person name="Pichon C."/>
            <person name="Rouy Z."/>
            <person name="Ruf C.S."/>
            <person name="Schneider D."/>
            <person name="Tourret J."/>
            <person name="Vacherie B."/>
            <person name="Vallenet D."/>
            <person name="Medigue C."/>
            <person name="Rocha E.P.C."/>
            <person name="Denamur E."/>
        </authorList>
    </citation>
    <scope>NUCLEOTIDE SEQUENCE [LARGE SCALE GENOMIC DNA]</scope>
    <source>
        <strain>ED1a</strain>
    </source>
</reference>
<feature type="chain" id="PRO_1000199206" description="Leucine--tRNA ligase">
    <location>
        <begin position="1"/>
        <end position="860"/>
    </location>
</feature>
<feature type="short sequence motif" description="'HIGH' region">
    <location>
        <begin position="42"/>
        <end position="52"/>
    </location>
</feature>
<feature type="short sequence motif" description="'KMSKS' region">
    <location>
        <begin position="619"/>
        <end position="623"/>
    </location>
</feature>
<feature type="binding site" evidence="1">
    <location>
        <position position="622"/>
    </location>
    <ligand>
        <name>ATP</name>
        <dbReference type="ChEBI" id="CHEBI:30616"/>
    </ligand>
</feature>
<name>SYL_ECO81</name>
<proteinExistence type="inferred from homology"/>
<protein>
    <recommendedName>
        <fullName evidence="1">Leucine--tRNA ligase</fullName>
        <ecNumber evidence="1">6.1.1.4</ecNumber>
    </recommendedName>
    <alternativeName>
        <fullName evidence="1">Leucyl-tRNA synthetase</fullName>
        <shortName evidence="1">LeuRS</shortName>
    </alternativeName>
</protein>
<organism>
    <name type="scientific">Escherichia coli O81 (strain ED1a)</name>
    <dbReference type="NCBI Taxonomy" id="585397"/>
    <lineage>
        <taxon>Bacteria</taxon>
        <taxon>Pseudomonadati</taxon>
        <taxon>Pseudomonadota</taxon>
        <taxon>Gammaproteobacteria</taxon>
        <taxon>Enterobacterales</taxon>
        <taxon>Enterobacteriaceae</taxon>
        <taxon>Escherichia</taxon>
    </lineage>
</organism>
<evidence type="ECO:0000255" key="1">
    <source>
        <dbReference type="HAMAP-Rule" id="MF_00049"/>
    </source>
</evidence>
<accession>B7MRS9</accession>